<name>EI3G1_DROPS</name>
<proteinExistence type="inferred from homology"/>
<comment type="function">
    <text evidence="2">RNA-binding component of the eukaryotic translation initiation factor 3 (eIF-3) complex, which is involved in protein synthesis of a specialized repertoire of mRNAs and, together with other initiation factors, stimulates binding of mRNA and methionyl-tRNAi to the 40S ribosome. The eIF-3 complex specifically targets and initiates translation of a subset of mRNAs involved in cell proliferation. This subunit can bind 18S rRNA.</text>
</comment>
<comment type="subunit">
    <text evidence="2">Component of the eukaryotic translation initiation factor 3 (eIF-3) complex. The eIF-3 complex interacts with pix.</text>
</comment>
<comment type="subcellular location">
    <subcellularLocation>
        <location evidence="2">Cytoplasm</location>
    </subcellularLocation>
</comment>
<comment type="similarity">
    <text evidence="2">Belongs to the eIF-3 subunit G family.</text>
</comment>
<organism>
    <name type="scientific">Drosophila pseudoobscura pseudoobscura</name>
    <name type="common">Fruit fly</name>
    <dbReference type="NCBI Taxonomy" id="46245"/>
    <lineage>
        <taxon>Eukaryota</taxon>
        <taxon>Metazoa</taxon>
        <taxon>Ecdysozoa</taxon>
        <taxon>Arthropoda</taxon>
        <taxon>Hexapoda</taxon>
        <taxon>Insecta</taxon>
        <taxon>Pterygota</taxon>
        <taxon>Neoptera</taxon>
        <taxon>Endopterygota</taxon>
        <taxon>Diptera</taxon>
        <taxon>Brachycera</taxon>
        <taxon>Muscomorpha</taxon>
        <taxon>Ephydroidea</taxon>
        <taxon>Drosophilidae</taxon>
        <taxon>Drosophila</taxon>
        <taxon>Sophophora</taxon>
    </lineage>
</organism>
<sequence>MPGVETIKSSWADEVELDYGGLPPTTENVENGHKYVTEYKYNKDDKKTKVVRTYKISKQVVPKTVAKRRTWTKFGESKSDKPGPNSHTTMVSEEIIMQFLNSKEDEKANDPLLDPTKNIAKCRICNGEHWSVNCPYKGTAMDTNLMEKKAAAAASAAVDAPKSGKYVPPFLKDSQKGGLGMRGRDDTAAIRISNLSESMTEADLEELVKKIGPQSKMYLARDKNTGLCKGFAYVHFKQRKDAAAAIEILNGHGYDHLILSVEWSKPQNN</sequence>
<protein>
    <recommendedName>
        <fullName evidence="1">Eukaryotic translation initiation factor 3 subunit G-1</fullName>
    </recommendedName>
    <alternativeName>
        <fullName evidence="2">Eukaryotic translation initiation factor 3 RNA-binding subunit 1</fullName>
        <shortName evidence="2">eIF-3 RNA-binding subunit 1</shortName>
    </alternativeName>
    <alternativeName>
        <fullName evidence="2">Eukaryotic translation initiation factor 3 subunit 4-1</fullName>
    </alternativeName>
</protein>
<evidence type="ECO:0000250" key="1">
    <source>
        <dbReference type="UniProtKB" id="Q9W4X7"/>
    </source>
</evidence>
<evidence type="ECO:0000255" key="2">
    <source>
        <dbReference type="HAMAP-Rule" id="MF_03006"/>
    </source>
</evidence>
<accession>Q29GU0</accession>
<keyword id="KW-0963">Cytoplasm</keyword>
<keyword id="KW-0396">Initiation factor</keyword>
<keyword id="KW-0648">Protein biosynthesis</keyword>
<keyword id="KW-1185">Reference proteome</keyword>
<keyword id="KW-0694">RNA-binding</keyword>
<dbReference type="EMBL" id="CH379064">
    <property type="protein sequence ID" value="EAL32019.1"/>
    <property type="molecule type" value="Genomic_DNA"/>
</dbReference>
<dbReference type="RefSeq" id="XP_001354963.1">
    <property type="nucleotide sequence ID" value="XM_001354927.3"/>
</dbReference>
<dbReference type="SMR" id="Q29GU0"/>
<dbReference type="FunCoup" id="Q29GU0">
    <property type="interactions" value="1750"/>
</dbReference>
<dbReference type="STRING" id="46245.Q29GU0"/>
<dbReference type="EnsemblMetazoa" id="FBtr0274783">
    <property type="protein sequence ID" value="FBpp0273221"/>
    <property type="gene ID" value="FBgn0081214"/>
</dbReference>
<dbReference type="GeneID" id="4815012"/>
<dbReference type="KEGG" id="dpo:4815012"/>
<dbReference type="CTD" id="31243"/>
<dbReference type="eggNOG" id="KOG0122">
    <property type="taxonomic scope" value="Eukaryota"/>
</dbReference>
<dbReference type="HOGENOM" id="CLU_034595_0_0_1"/>
<dbReference type="InParanoid" id="Q29GU0"/>
<dbReference type="OMA" id="ICQGDHF"/>
<dbReference type="PhylomeDB" id="Q29GU0"/>
<dbReference type="Proteomes" id="UP000001819">
    <property type="component" value="Chromosome X"/>
</dbReference>
<dbReference type="Bgee" id="FBgn0081214">
    <property type="expression patterns" value="Expressed in female reproductive system and 2 other cell types or tissues"/>
</dbReference>
<dbReference type="GO" id="GO:0016282">
    <property type="term" value="C:eukaryotic 43S preinitiation complex"/>
    <property type="evidence" value="ECO:0007669"/>
    <property type="project" value="UniProtKB-UniRule"/>
</dbReference>
<dbReference type="GO" id="GO:0033290">
    <property type="term" value="C:eukaryotic 48S preinitiation complex"/>
    <property type="evidence" value="ECO:0007669"/>
    <property type="project" value="UniProtKB-UniRule"/>
</dbReference>
<dbReference type="GO" id="GO:0005852">
    <property type="term" value="C:eukaryotic translation initiation factor 3 complex"/>
    <property type="evidence" value="ECO:0007669"/>
    <property type="project" value="UniProtKB-UniRule"/>
</dbReference>
<dbReference type="GO" id="GO:0003723">
    <property type="term" value="F:RNA binding"/>
    <property type="evidence" value="ECO:0007669"/>
    <property type="project" value="UniProtKB-UniRule"/>
</dbReference>
<dbReference type="GO" id="GO:0003743">
    <property type="term" value="F:translation initiation factor activity"/>
    <property type="evidence" value="ECO:0007669"/>
    <property type="project" value="UniProtKB-UniRule"/>
</dbReference>
<dbReference type="GO" id="GO:0001732">
    <property type="term" value="P:formation of cytoplasmic translation initiation complex"/>
    <property type="evidence" value="ECO:0007669"/>
    <property type="project" value="UniProtKB-UniRule"/>
</dbReference>
<dbReference type="CDD" id="cd12933">
    <property type="entry name" value="eIF3G"/>
    <property type="match status" value="1"/>
</dbReference>
<dbReference type="CDD" id="cd12408">
    <property type="entry name" value="RRM_eIF3G_like"/>
    <property type="match status" value="1"/>
</dbReference>
<dbReference type="FunFam" id="3.30.70.330:FF:000828">
    <property type="entry name" value="Eukaryotic translation initiation factor 3 subunit G"/>
    <property type="match status" value="1"/>
</dbReference>
<dbReference type="Gene3D" id="3.30.70.330">
    <property type="match status" value="1"/>
</dbReference>
<dbReference type="HAMAP" id="MF_03006">
    <property type="entry name" value="eIF3g"/>
    <property type="match status" value="1"/>
</dbReference>
<dbReference type="InterPro" id="IPR017334">
    <property type="entry name" value="eIF3_g"/>
</dbReference>
<dbReference type="InterPro" id="IPR024675">
    <property type="entry name" value="eIF3g_N"/>
</dbReference>
<dbReference type="InterPro" id="IPR034240">
    <property type="entry name" value="eIF3G_RRM"/>
</dbReference>
<dbReference type="InterPro" id="IPR012677">
    <property type="entry name" value="Nucleotide-bd_a/b_plait_sf"/>
</dbReference>
<dbReference type="InterPro" id="IPR035979">
    <property type="entry name" value="RBD_domain_sf"/>
</dbReference>
<dbReference type="InterPro" id="IPR000504">
    <property type="entry name" value="RRM_dom"/>
</dbReference>
<dbReference type="PANTHER" id="PTHR10352">
    <property type="entry name" value="EUKARYOTIC TRANSLATION INITIATION FACTOR 3 SUBUNIT G"/>
    <property type="match status" value="1"/>
</dbReference>
<dbReference type="Pfam" id="PF12353">
    <property type="entry name" value="eIF3g"/>
    <property type="match status" value="1"/>
</dbReference>
<dbReference type="Pfam" id="PF00076">
    <property type="entry name" value="RRM_1"/>
    <property type="match status" value="1"/>
</dbReference>
<dbReference type="PIRSF" id="PIRSF037949">
    <property type="entry name" value="Transl_init_eIF-3_RNA-bind"/>
    <property type="match status" value="1"/>
</dbReference>
<dbReference type="SMART" id="SM00360">
    <property type="entry name" value="RRM"/>
    <property type="match status" value="1"/>
</dbReference>
<dbReference type="SUPFAM" id="SSF54928">
    <property type="entry name" value="RNA-binding domain, RBD"/>
    <property type="match status" value="1"/>
</dbReference>
<dbReference type="PROSITE" id="PS50102">
    <property type="entry name" value="RRM"/>
    <property type="match status" value="1"/>
</dbReference>
<feature type="chain" id="PRO_0000365419" description="Eukaryotic translation initiation factor 3 subunit G-1">
    <location>
        <begin position="1"/>
        <end position="269"/>
    </location>
</feature>
<feature type="domain" description="RRM" evidence="2">
    <location>
        <begin position="188"/>
        <end position="266"/>
    </location>
</feature>
<gene>
    <name evidence="1" type="primary">eIF3g1</name>
    <name evidence="2" type="synonym">eIF3-S4</name>
    <name evidence="1" type="synonym">eIF3ga</name>
    <name type="ORF">GA21226</name>
</gene>
<reference key="1">
    <citation type="journal article" date="2005" name="Genome Res.">
        <title>Comparative genome sequencing of Drosophila pseudoobscura: chromosomal, gene, and cis-element evolution.</title>
        <authorList>
            <person name="Richards S."/>
            <person name="Liu Y."/>
            <person name="Bettencourt B.R."/>
            <person name="Hradecky P."/>
            <person name="Letovsky S."/>
            <person name="Nielsen R."/>
            <person name="Thornton K."/>
            <person name="Hubisz M.J."/>
            <person name="Chen R."/>
            <person name="Meisel R.P."/>
            <person name="Couronne O."/>
            <person name="Hua S."/>
            <person name="Smith M.A."/>
            <person name="Zhang P."/>
            <person name="Liu J."/>
            <person name="Bussemaker H.J."/>
            <person name="van Batenburg M.F."/>
            <person name="Howells S.L."/>
            <person name="Scherer S.E."/>
            <person name="Sodergren E."/>
            <person name="Matthews B.B."/>
            <person name="Crosby M.A."/>
            <person name="Schroeder A.J."/>
            <person name="Ortiz-Barrientos D."/>
            <person name="Rives C.M."/>
            <person name="Metzker M.L."/>
            <person name="Muzny D.M."/>
            <person name="Scott G."/>
            <person name="Steffen D."/>
            <person name="Wheeler D.A."/>
            <person name="Worley K.C."/>
            <person name="Havlak P."/>
            <person name="Durbin K.J."/>
            <person name="Egan A."/>
            <person name="Gill R."/>
            <person name="Hume J."/>
            <person name="Morgan M.B."/>
            <person name="Miner G."/>
            <person name="Hamilton C."/>
            <person name="Huang Y."/>
            <person name="Waldron L."/>
            <person name="Verduzco D."/>
            <person name="Clerc-Blankenburg K.P."/>
            <person name="Dubchak I."/>
            <person name="Noor M.A.F."/>
            <person name="Anderson W."/>
            <person name="White K.P."/>
            <person name="Clark A.G."/>
            <person name="Schaeffer S.W."/>
            <person name="Gelbart W.M."/>
            <person name="Weinstock G.M."/>
            <person name="Gibbs R.A."/>
        </authorList>
    </citation>
    <scope>NUCLEOTIDE SEQUENCE [LARGE SCALE GENOMIC DNA]</scope>
    <source>
        <strain>MV2-25 / Tucson 14011-0121.94</strain>
    </source>
</reference>